<proteinExistence type="evidence at protein level"/>
<dbReference type="EC" id="3.4.19.12"/>
<dbReference type="EMBL" id="AL732570">
    <property type="status" value="NOT_ANNOTATED_CDS"/>
    <property type="molecule type" value="Genomic_DNA"/>
</dbReference>
<dbReference type="EMBL" id="AK083271">
    <property type="protein sequence ID" value="BAC38837.1"/>
    <property type="status" value="ALT_INIT"/>
    <property type="molecule type" value="mRNA"/>
</dbReference>
<dbReference type="EMBL" id="BC021474">
    <property type="protein sequence ID" value="AAH21474.1"/>
    <property type="status" value="ALT_INIT"/>
    <property type="molecule type" value="mRNA"/>
</dbReference>
<dbReference type="CCDS" id="CCDS24861.2">
    <molecule id="Q8BUM9-1"/>
</dbReference>
<dbReference type="RefSeq" id="NP_001277978.1">
    <property type="nucleotide sequence ID" value="NM_001291049.1"/>
</dbReference>
<dbReference type="RefSeq" id="NP_776115.2">
    <molecule id="Q8BUM9-1"/>
    <property type="nucleotide sequence ID" value="NM_173754.4"/>
</dbReference>
<dbReference type="SMR" id="Q8BUM9"/>
<dbReference type="FunCoup" id="Q8BUM9">
    <property type="interactions" value="231"/>
</dbReference>
<dbReference type="STRING" id="10090.ENSMUSP00000021288"/>
<dbReference type="MEROPS" id="C19.979"/>
<dbReference type="GlyGen" id="Q8BUM9">
    <property type="glycosylation" value="2 sites, 1 O-linked glycan (2 sites)"/>
</dbReference>
<dbReference type="iPTMnet" id="Q8BUM9"/>
<dbReference type="PhosphoSitePlus" id="Q8BUM9"/>
<dbReference type="PaxDb" id="10090-ENSMUSP00000021288"/>
<dbReference type="ProteomicsDB" id="297705">
    <molecule id="Q8BUM9-1"/>
</dbReference>
<dbReference type="ProteomicsDB" id="297706">
    <molecule id="Q8BUM9-2"/>
</dbReference>
<dbReference type="Antibodypedia" id="6274">
    <property type="antibodies" value="149 antibodies from 24 providers"/>
</dbReference>
<dbReference type="DNASU" id="216835"/>
<dbReference type="Ensembl" id="ENSMUST00000021288.10">
    <molecule id="Q8BUM9-1"/>
    <property type="protein sequence ID" value="ENSMUSP00000021288.4"/>
    <property type="gene ID" value="ENSMUSG00000020905.12"/>
</dbReference>
<dbReference type="GeneID" id="216835"/>
<dbReference type="KEGG" id="mmu:216835"/>
<dbReference type="UCSC" id="uc007jne.1">
    <molecule id="Q8BUM9-1"/>
    <property type="organism name" value="mouse"/>
</dbReference>
<dbReference type="AGR" id="MGI:2444541"/>
<dbReference type="CTD" id="124739"/>
<dbReference type="MGI" id="MGI:2444541">
    <property type="gene designation" value="Usp43"/>
</dbReference>
<dbReference type="VEuPathDB" id="HostDB:ENSMUSG00000020905"/>
<dbReference type="eggNOG" id="KOG1868">
    <property type="taxonomic scope" value="Eukaryota"/>
</dbReference>
<dbReference type="eggNOG" id="KOG1870">
    <property type="taxonomic scope" value="Eukaryota"/>
</dbReference>
<dbReference type="GeneTree" id="ENSGT00940000158772"/>
<dbReference type="HOGENOM" id="CLU_001060_6_0_1"/>
<dbReference type="InParanoid" id="Q8BUM9"/>
<dbReference type="OMA" id="WKQPGCL"/>
<dbReference type="OrthoDB" id="292964at2759"/>
<dbReference type="PhylomeDB" id="Q8BUM9"/>
<dbReference type="TreeFam" id="TF106278"/>
<dbReference type="Reactome" id="R-MMU-5656169">
    <property type="pathway name" value="Termination of translesion DNA synthesis"/>
</dbReference>
<dbReference type="BioGRID-ORCS" id="216835">
    <property type="hits" value="2 hits in 77 CRISPR screens"/>
</dbReference>
<dbReference type="ChiTaRS" id="Usp43">
    <property type="organism name" value="mouse"/>
</dbReference>
<dbReference type="PRO" id="PR:Q8BUM9"/>
<dbReference type="Proteomes" id="UP000000589">
    <property type="component" value="Chromosome 11"/>
</dbReference>
<dbReference type="RNAct" id="Q8BUM9">
    <property type="molecule type" value="protein"/>
</dbReference>
<dbReference type="Bgee" id="ENSMUSG00000020905">
    <property type="expression patterns" value="Expressed in animal zygote and 118 other cell types or tissues"/>
</dbReference>
<dbReference type="ExpressionAtlas" id="Q8BUM9">
    <property type="expression patterns" value="baseline and differential"/>
</dbReference>
<dbReference type="GO" id="GO:0004843">
    <property type="term" value="F:cysteine-type deubiquitinase activity"/>
    <property type="evidence" value="ECO:0007669"/>
    <property type="project" value="UniProtKB-EC"/>
</dbReference>
<dbReference type="GO" id="GO:0016579">
    <property type="term" value="P:protein deubiquitination"/>
    <property type="evidence" value="ECO:0007669"/>
    <property type="project" value="InterPro"/>
</dbReference>
<dbReference type="GO" id="GO:0006508">
    <property type="term" value="P:proteolysis"/>
    <property type="evidence" value="ECO:0007669"/>
    <property type="project" value="UniProtKB-KW"/>
</dbReference>
<dbReference type="CDD" id="cd02674">
    <property type="entry name" value="Peptidase_C19R"/>
    <property type="match status" value="1"/>
</dbReference>
<dbReference type="FunFam" id="3.90.70.10:FF:000048">
    <property type="entry name" value="Ubiquitin carboxyl-terminal hydrolase 31"/>
    <property type="match status" value="1"/>
</dbReference>
<dbReference type="FunFam" id="3.90.70.10:FF:000046">
    <property type="entry name" value="ubiquitin carboxyl-terminal hydrolase 31"/>
    <property type="match status" value="1"/>
</dbReference>
<dbReference type="Gene3D" id="3.90.70.10">
    <property type="entry name" value="Cysteine proteinases"/>
    <property type="match status" value="2"/>
</dbReference>
<dbReference type="InterPro" id="IPR038765">
    <property type="entry name" value="Papain-like_cys_pep_sf"/>
</dbReference>
<dbReference type="InterPro" id="IPR001394">
    <property type="entry name" value="Peptidase_C19_UCH"/>
</dbReference>
<dbReference type="InterPro" id="IPR050185">
    <property type="entry name" value="Ub_carboxyl-term_hydrolase"/>
</dbReference>
<dbReference type="InterPro" id="IPR018200">
    <property type="entry name" value="USP_CS"/>
</dbReference>
<dbReference type="InterPro" id="IPR028889">
    <property type="entry name" value="USP_dom"/>
</dbReference>
<dbReference type="PANTHER" id="PTHR21646">
    <property type="entry name" value="UBIQUITIN CARBOXYL-TERMINAL HYDROLASE"/>
    <property type="match status" value="1"/>
</dbReference>
<dbReference type="PANTHER" id="PTHR21646:SF20">
    <property type="entry name" value="UBIQUITIN CARBOXYL-TERMINAL HYDROLASE 43"/>
    <property type="match status" value="1"/>
</dbReference>
<dbReference type="Pfam" id="PF00443">
    <property type="entry name" value="UCH"/>
    <property type="match status" value="1"/>
</dbReference>
<dbReference type="SUPFAM" id="SSF54001">
    <property type="entry name" value="Cysteine proteinases"/>
    <property type="match status" value="1"/>
</dbReference>
<dbReference type="PROSITE" id="PS00972">
    <property type="entry name" value="USP_1"/>
    <property type="match status" value="1"/>
</dbReference>
<dbReference type="PROSITE" id="PS00973">
    <property type="entry name" value="USP_2"/>
    <property type="match status" value="1"/>
</dbReference>
<dbReference type="PROSITE" id="PS50235">
    <property type="entry name" value="USP_3"/>
    <property type="match status" value="1"/>
</dbReference>
<evidence type="ECO:0000250" key="1"/>
<evidence type="ECO:0000255" key="2">
    <source>
        <dbReference type="PROSITE-ProRule" id="PRU10092"/>
    </source>
</evidence>
<evidence type="ECO:0000255" key="3">
    <source>
        <dbReference type="PROSITE-ProRule" id="PRU10093"/>
    </source>
</evidence>
<evidence type="ECO:0000256" key="4">
    <source>
        <dbReference type="SAM" id="MobiDB-lite"/>
    </source>
</evidence>
<evidence type="ECO:0000303" key="5">
    <source>
    </source>
</evidence>
<evidence type="ECO:0000305" key="6"/>
<evidence type="ECO:0007744" key="7">
    <source>
    </source>
</evidence>
<evidence type="ECO:0007744" key="8">
    <source>
    </source>
</evidence>
<accession>Q8BUM9</accession>
<accession>Q8VDP5</accession>
<sequence>MDPGVGNALGEGPPAPRPRRRRSLRRLLNRFLLALGSRSRSGDSPPRPPAQPSPYDGDGEGGFACAPGPAPASAGSPGPDRPPGSQPQISSGDGARPPGAQGLKNHGNTCFMNAVVQCLSNTDLLAEFLALGRYRAAPGRAEVTEQLAALVRALWTREYTPQLSAEFKNAVSKYGSQFQGNSQHDALEFLLWLLDRVHEDLEGSAHGLVSEQLPPEVSKISEDLRPSAAPTSLGPSFVQSHFQAQYRSSLTCPHCLKQSNTFDPFLCVSLPIPLRQTRFLSVTLVFPSKSQRFLRVGLAVPILSTVAALRKMVAEEGGVPAEEVILVELYPNGFQRSFFDEEDLNTIAEGDNVYAFQVPPSPGLGTLSAHPSGLSVSPRLPVRDSQRFSGPLHSENRVVFLFCNLVGSGQQASRFGPPFLIREDRTISWAQLQQCILSKVRCLMRSEVSAQDLGTLFSIRVVGLSLACSYLSPKDNRPLCHWAVDRALHLRRPGGPPHVKLAVEWDSSVTERLFGSLQEERVQDADSVWRQQQAHQQPSCTLDECFQSYTKEEQLAQDDAWKCPHCQVLQQGVVKLSLWTLPDILIIHLKRFCQVGERRNKLSTLVKFPLSGLNMAPHVARRSTNSKAGPGPWSSWKQPICLPTTYPLDFLYDLYAVCNHHGSLQGGHYTAYCRNSLDGQWYSYDDSTVEALREDEVNTRGAYILFYQKRNSIPPWSASSSMRGSTSSSLSDHWLMRLGSLNNSTRGSLLSWSSAPCPSMARVPDSPVFTNGVCHQDKGGVETRPLVRGVGGRSISMKASPASRSRHGPFKTMPLRWSFGHREKRPGASVELVEYLESRRRPRSTSQSIVPLLTRAAGGEETSASPRSDGTLPAKSEDSGRAIGQGTTGVPLSSCHLNHHPALGSLDDSLHTARTRTGNVSQDIRLPKKFDLPLTVMPSVGDEKPARPEGQKMTPWKGSSQVGSQSSPPSPSTGLLRNFKDSGPGTLPKMKSKAAMEERAPDKDRGQGTFTLLKSVFWKKEHKRTVRTESSPPAPPISLGSDRLSPAAMNEQALRIRESPAKGLGNHMERDIRSAPSSLHLPRKASRPPRASTAGTSQRTIPGEQISYGTLQRVKYHTLSLGRKKSLPESSF</sequence>
<comment type="function">
    <text evidence="1">May recognize and hydrolyze the peptide bond at the C-terminal Gly of ubiquitin. Involved in the processing of poly-ubiquitin precursors as well as that of ubiquitinated proteins (By similarity).</text>
</comment>
<comment type="catalytic activity">
    <reaction>
        <text>Thiol-dependent hydrolysis of ester, thioester, amide, peptide and isopeptide bonds formed by the C-terminal Gly of ubiquitin (a 76-residue protein attached to proteins as an intracellular targeting signal).</text>
        <dbReference type="EC" id="3.4.19.12"/>
    </reaction>
</comment>
<comment type="alternative products">
    <event type="alternative splicing"/>
    <isoform>
        <id>Q8BUM9-1</id>
        <name>1</name>
        <sequence type="displayed"/>
    </isoform>
    <isoform>
        <id>Q8BUM9-2</id>
        <name>2</name>
        <sequence type="described" ref="VSP_020469 VSP_020470"/>
    </isoform>
</comment>
<comment type="similarity">
    <text evidence="6">Belongs to the peptidase C19 family.</text>
</comment>
<comment type="sequence caution" evidence="6">
    <conflict type="erroneous initiation">
        <sequence resource="EMBL-CDS" id="AAH21474"/>
    </conflict>
</comment>
<comment type="sequence caution" evidence="6">
    <conflict type="erroneous initiation">
        <sequence resource="EMBL-CDS" id="BAC38837"/>
    </conflict>
</comment>
<keyword id="KW-0025">Alternative splicing</keyword>
<keyword id="KW-0378">Hydrolase</keyword>
<keyword id="KW-0488">Methylation</keyword>
<keyword id="KW-0597">Phosphoprotein</keyword>
<keyword id="KW-0645">Protease</keyword>
<keyword id="KW-1185">Reference proteome</keyword>
<keyword id="KW-0788">Thiol protease</keyword>
<keyword id="KW-0833">Ubl conjugation pathway</keyword>
<reference key="1">
    <citation type="journal article" date="2009" name="PLoS Biol.">
        <title>Lineage-specific biology revealed by a finished genome assembly of the mouse.</title>
        <authorList>
            <person name="Church D.M."/>
            <person name="Goodstadt L."/>
            <person name="Hillier L.W."/>
            <person name="Zody M.C."/>
            <person name="Goldstein S."/>
            <person name="She X."/>
            <person name="Bult C.J."/>
            <person name="Agarwala R."/>
            <person name="Cherry J.L."/>
            <person name="DiCuccio M."/>
            <person name="Hlavina W."/>
            <person name="Kapustin Y."/>
            <person name="Meric P."/>
            <person name="Maglott D."/>
            <person name="Birtle Z."/>
            <person name="Marques A.C."/>
            <person name="Graves T."/>
            <person name="Zhou S."/>
            <person name="Teague B."/>
            <person name="Potamousis K."/>
            <person name="Churas C."/>
            <person name="Place M."/>
            <person name="Herschleb J."/>
            <person name="Runnheim R."/>
            <person name="Forrest D."/>
            <person name="Amos-Landgraf J."/>
            <person name="Schwartz D.C."/>
            <person name="Cheng Z."/>
            <person name="Lindblad-Toh K."/>
            <person name="Eichler E.E."/>
            <person name="Ponting C.P."/>
        </authorList>
    </citation>
    <scope>NUCLEOTIDE SEQUENCE [LARGE SCALE GENOMIC DNA]</scope>
    <source>
        <strain>C57BL/6J</strain>
    </source>
</reference>
<reference key="2">
    <citation type="journal article" date="2005" name="Science">
        <title>The transcriptional landscape of the mammalian genome.</title>
        <authorList>
            <person name="Carninci P."/>
            <person name="Kasukawa T."/>
            <person name="Katayama S."/>
            <person name="Gough J."/>
            <person name="Frith M.C."/>
            <person name="Maeda N."/>
            <person name="Oyama R."/>
            <person name="Ravasi T."/>
            <person name="Lenhard B."/>
            <person name="Wells C."/>
            <person name="Kodzius R."/>
            <person name="Shimokawa K."/>
            <person name="Bajic V.B."/>
            <person name="Brenner S.E."/>
            <person name="Batalov S."/>
            <person name="Forrest A.R."/>
            <person name="Zavolan M."/>
            <person name="Davis M.J."/>
            <person name="Wilming L.G."/>
            <person name="Aidinis V."/>
            <person name="Allen J.E."/>
            <person name="Ambesi-Impiombato A."/>
            <person name="Apweiler R."/>
            <person name="Aturaliya R.N."/>
            <person name="Bailey T.L."/>
            <person name="Bansal M."/>
            <person name="Baxter L."/>
            <person name="Beisel K.W."/>
            <person name="Bersano T."/>
            <person name="Bono H."/>
            <person name="Chalk A.M."/>
            <person name="Chiu K.P."/>
            <person name="Choudhary V."/>
            <person name="Christoffels A."/>
            <person name="Clutterbuck D.R."/>
            <person name="Crowe M.L."/>
            <person name="Dalla E."/>
            <person name="Dalrymple B.P."/>
            <person name="de Bono B."/>
            <person name="Della Gatta G."/>
            <person name="di Bernardo D."/>
            <person name="Down T."/>
            <person name="Engstrom P."/>
            <person name="Fagiolini M."/>
            <person name="Faulkner G."/>
            <person name="Fletcher C.F."/>
            <person name="Fukushima T."/>
            <person name="Furuno M."/>
            <person name="Futaki S."/>
            <person name="Gariboldi M."/>
            <person name="Georgii-Hemming P."/>
            <person name="Gingeras T.R."/>
            <person name="Gojobori T."/>
            <person name="Green R.E."/>
            <person name="Gustincich S."/>
            <person name="Harbers M."/>
            <person name="Hayashi Y."/>
            <person name="Hensch T.K."/>
            <person name="Hirokawa N."/>
            <person name="Hill D."/>
            <person name="Huminiecki L."/>
            <person name="Iacono M."/>
            <person name="Ikeo K."/>
            <person name="Iwama A."/>
            <person name="Ishikawa T."/>
            <person name="Jakt M."/>
            <person name="Kanapin A."/>
            <person name="Katoh M."/>
            <person name="Kawasawa Y."/>
            <person name="Kelso J."/>
            <person name="Kitamura H."/>
            <person name="Kitano H."/>
            <person name="Kollias G."/>
            <person name="Krishnan S.P."/>
            <person name="Kruger A."/>
            <person name="Kummerfeld S.K."/>
            <person name="Kurochkin I.V."/>
            <person name="Lareau L.F."/>
            <person name="Lazarevic D."/>
            <person name="Lipovich L."/>
            <person name="Liu J."/>
            <person name="Liuni S."/>
            <person name="McWilliam S."/>
            <person name="Madan Babu M."/>
            <person name="Madera M."/>
            <person name="Marchionni L."/>
            <person name="Matsuda H."/>
            <person name="Matsuzawa S."/>
            <person name="Miki H."/>
            <person name="Mignone F."/>
            <person name="Miyake S."/>
            <person name="Morris K."/>
            <person name="Mottagui-Tabar S."/>
            <person name="Mulder N."/>
            <person name="Nakano N."/>
            <person name="Nakauchi H."/>
            <person name="Ng P."/>
            <person name="Nilsson R."/>
            <person name="Nishiguchi S."/>
            <person name="Nishikawa S."/>
            <person name="Nori F."/>
            <person name="Ohara O."/>
            <person name="Okazaki Y."/>
            <person name="Orlando V."/>
            <person name="Pang K.C."/>
            <person name="Pavan W.J."/>
            <person name="Pavesi G."/>
            <person name="Pesole G."/>
            <person name="Petrovsky N."/>
            <person name="Piazza S."/>
            <person name="Reed J."/>
            <person name="Reid J.F."/>
            <person name="Ring B.Z."/>
            <person name="Ringwald M."/>
            <person name="Rost B."/>
            <person name="Ruan Y."/>
            <person name="Salzberg S.L."/>
            <person name="Sandelin A."/>
            <person name="Schneider C."/>
            <person name="Schoenbach C."/>
            <person name="Sekiguchi K."/>
            <person name="Semple C.A."/>
            <person name="Seno S."/>
            <person name="Sessa L."/>
            <person name="Sheng Y."/>
            <person name="Shibata Y."/>
            <person name="Shimada H."/>
            <person name="Shimada K."/>
            <person name="Silva D."/>
            <person name="Sinclair B."/>
            <person name="Sperling S."/>
            <person name="Stupka E."/>
            <person name="Sugiura K."/>
            <person name="Sultana R."/>
            <person name="Takenaka Y."/>
            <person name="Taki K."/>
            <person name="Tammoja K."/>
            <person name="Tan S.L."/>
            <person name="Tang S."/>
            <person name="Taylor M.S."/>
            <person name="Tegner J."/>
            <person name="Teichmann S.A."/>
            <person name="Ueda H.R."/>
            <person name="van Nimwegen E."/>
            <person name="Verardo R."/>
            <person name="Wei C.L."/>
            <person name="Yagi K."/>
            <person name="Yamanishi H."/>
            <person name="Zabarovsky E."/>
            <person name="Zhu S."/>
            <person name="Zimmer A."/>
            <person name="Hide W."/>
            <person name="Bult C."/>
            <person name="Grimmond S.M."/>
            <person name="Teasdale R.D."/>
            <person name="Liu E.T."/>
            <person name="Brusic V."/>
            <person name="Quackenbush J."/>
            <person name="Wahlestedt C."/>
            <person name="Mattick J.S."/>
            <person name="Hume D.A."/>
            <person name="Kai C."/>
            <person name="Sasaki D."/>
            <person name="Tomaru Y."/>
            <person name="Fukuda S."/>
            <person name="Kanamori-Katayama M."/>
            <person name="Suzuki M."/>
            <person name="Aoki J."/>
            <person name="Arakawa T."/>
            <person name="Iida J."/>
            <person name="Imamura K."/>
            <person name="Itoh M."/>
            <person name="Kato T."/>
            <person name="Kawaji H."/>
            <person name="Kawagashira N."/>
            <person name="Kawashima T."/>
            <person name="Kojima M."/>
            <person name="Kondo S."/>
            <person name="Konno H."/>
            <person name="Nakano K."/>
            <person name="Ninomiya N."/>
            <person name="Nishio T."/>
            <person name="Okada M."/>
            <person name="Plessy C."/>
            <person name="Shibata K."/>
            <person name="Shiraki T."/>
            <person name="Suzuki S."/>
            <person name="Tagami M."/>
            <person name="Waki K."/>
            <person name="Watahiki A."/>
            <person name="Okamura-Oho Y."/>
            <person name="Suzuki H."/>
            <person name="Kawai J."/>
            <person name="Hayashizaki Y."/>
        </authorList>
    </citation>
    <scope>NUCLEOTIDE SEQUENCE [LARGE SCALE MRNA] OF 21-1132 (ISOFORM 1)</scope>
    <source>
        <strain>C57BL/6J</strain>
        <tissue>Hippocampus</tissue>
    </source>
</reference>
<reference key="3">
    <citation type="journal article" date="2004" name="Genome Res.">
        <title>The status, quality, and expansion of the NIH full-length cDNA project: the Mammalian Gene Collection (MGC).</title>
        <authorList>
            <consortium name="The MGC Project Team"/>
        </authorList>
    </citation>
    <scope>NUCLEOTIDE SEQUENCE [LARGE SCALE MRNA] OF 207-1132 (ISOFORM 2)</scope>
    <source>
        <strain>FVB/N</strain>
        <tissue>Mammary tumor</tissue>
    </source>
</reference>
<reference key="4">
    <citation type="journal article" date="2010" name="Cell">
        <title>A tissue-specific atlas of mouse protein phosphorylation and expression.</title>
        <authorList>
            <person name="Huttlin E.L."/>
            <person name="Jedrychowski M.P."/>
            <person name="Elias J.E."/>
            <person name="Goswami T."/>
            <person name="Rad R."/>
            <person name="Beausoleil S.A."/>
            <person name="Villen J."/>
            <person name="Haas W."/>
            <person name="Sowa M.E."/>
            <person name="Gygi S.P."/>
        </authorList>
    </citation>
    <scope>PHOSPHORYLATION [LARGE SCALE ANALYSIS] AT SER-970</scope>
    <scope>IDENTIFICATION BY MASS SPECTROMETRY [LARGE SCALE ANALYSIS]</scope>
    <source>
        <tissue>Brain</tissue>
    </source>
</reference>
<reference key="5">
    <citation type="journal article" date="2014" name="Mol. Cell. Proteomics">
        <title>Immunoaffinity enrichment and mass spectrometry analysis of protein methylation.</title>
        <authorList>
            <person name="Guo A."/>
            <person name="Gu H."/>
            <person name="Zhou J."/>
            <person name="Mulhern D."/>
            <person name="Wang Y."/>
            <person name="Lee K.A."/>
            <person name="Yang V."/>
            <person name="Aguiar M."/>
            <person name="Kornhauser J."/>
            <person name="Jia X."/>
            <person name="Ren J."/>
            <person name="Beausoleil S.A."/>
            <person name="Silva J.C."/>
            <person name="Vemulapalli V."/>
            <person name="Bedford M.T."/>
            <person name="Comb M.J."/>
        </authorList>
    </citation>
    <scope>METHYLATION [LARGE SCALE ANALYSIS] AT ARG-746</scope>
    <scope>IDENTIFICATION BY MASS SPECTROMETRY [LARGE SCALE ANALYSIS]</scope>
    <source>
        <tissue>Brain</tissue>
    </source>
</reference>
<feature type="chain" id="PRO_0000249522" description="Ubiquitin carboxyl-terminal hydrolase 43">
    <location>
        <begin position="1"/>
        <end position="1132"/>
    </location>
</feature>
<feature type="domain" description="USP">
    <location>
        <begin position="101"/>
        <end position="710"/>
    </location>
</feature>
<feature type="region of interest" description="Disordered" evidence="4">
    <location>
        <begin position="1"/>
        <end position="103"/>
    </location>
</feature>
<feature type="region of interest" description="Disordered" evidence="4">
    <location>
        <begin position="839"/>
        <end position="891"/>
    </location>
</feature>
<feature type="region of interest" description="Disordered" evidence="4">
    <location>
        <begin position="935"/>
        <end position="1008"/>
    </location>
</feature>
<feature type="region of interest" description="Disordered" evidence="4">
    <location>
        <begin position="1024"/>
        <end position="1044"/>
    </location>
</feature>
<feature type="region of interest" description="Disordered" evidence="4">
    <location>
        <begin position="1057"/>
        <end position="1106"/>
    </location>
</feature>
<feature type="compositionally biased region" description="Basic residues" evidence="4">
    <location>
        <begin position="17"/>
        <end position="28"/>
    </location>
</feature>
<feature type="compositionally biased region" description="Low complexity" evidence="4">
    <location>
        <begin position="29"/>
        <end position="44"/>
    </location>
</feature>
<feature type="compositionally biased region" description="Low complexity" evidence="4">
    <location>
        <begin position="63"/>
        <end position="78"/>
    </location>
</feature>
<feature type="compositionally biased region" description="Basic and acidic residues" evidence="4">
    <location>
        <begin position="941"/>
        <end position="950"/>
    </location>
</feature>
<feature type="compositionally biased region" description="Low complexity" evidence="4">
    <location>
        <begin position="958"/>
        <end position="967"/>
    </location>
</feature>
<feature type="compositionally biased region" description="Basic and acidic residues" evidence="4">
    <location>
        <begin position="994"/>
        <end position="1006"/>
    </location>
</feature>
<feature type="active site" description="Nucleophile" evidence="2 3">
    <location>
        <position position="110"/>
    </location>
</feature>
<feature type="active site" description="Proton acceptor" evidence="2 3">
    <location>
        <position position="668"/>
    </location>
</feature>
<feature type="modified residue" description="Asymmetric dimethylarginine" evidence="8">
    <location>
        <position position="746"/>
    </location>
</feature>
<feature type="modified residue" description="Phosphoserine" evidence="7">
    <location>
        <position position="970"/>
    </location>
</feature>
<feature type="splice variant" id="VSP_020469" description="In isoform 2." evidence="5">
    <location>
        <position position="1047"/>
    </location>
</feature>
<feature type="splice variant" id="VSP_020470" description="In isoform 2." evidence="5">
    <original>Q</original>
    <variation>QARGSSP</variation>
    <location>
        <position position="1052"/>
    </location>
</feature>
<feature type="sequence conflict" description="In Ref. 3; AAH21474." evidence="6" ref="3">
    <original>M</original>
    <variation>V</variation>
    <location>
        <position position="760"/>
    </location>
</feature>
<feature type="sequence conflict" description="In Ref. 3; AAH21474." evidence="6" ref="3">
    <original>S</original>
    <variation>N</variation>
    <location>
        <position position="982"/>
    </location>
</feature>
<feature type="sequence conflict" description="In Ref. 3; AAH21474." evidence="6" ref="3">
    <original>D</original>
    <variation>G</variation>
    <location>
        <position position="1002"/>
    </location>
</feature>
<gene>
    <name type="primary">Usp43</name>
</gene>
<protein>
    <recommendedName>
        <fullName>Ubiquitin carboxyl-terminal hydrolase 43</fullName>
        <ecNumber>3.4.19.12</ecNumber>
    </recommendedName>
    <alternativeName>
        <fullName>Deubiquitinating enzyme 43</fullName>
    </alternativeName>
    <alternativeName>
        <fullName>Ubiquitin thioesterase 43</fullName>
    </alternativeName>
    <alternativeName>
        <fullName>Ubiquitin-specific-processing protease 43</fullName>
    </alternativeName>
</protein>
<organism>
    <name type="scientific">Mus musculus</name>
    <name type="common">Mouse</name>
    <dbReference type="NCBI Taxonomy" id="10090"/>
    <lineage>
        <taxon>Eukaryota</taxon>
        <taxon>Metazoa</taxon>
        <taxon>Chordata</taxon>
        <taxon>Craniata</taxon>
        <taxon>Vertebrata</taxon>
        <taxon>Euteleostomi</taxon>
        <taxon>Mammalia</taxon>
        <taxon>Eutheria</taxon>
        <taxon>Euarchontoglires</taxon>
        <taxon>Glires</taxon>
        <taxon>Rodentia</taxon>
        <taxon>Myomorpha</taxon>
        <taxon>Muroidea</taxon>
        <taxon>Muridae</taxon>
        <taxon>Murinae</taxon>
        <taxon>Mus</taxon>
        <taxon>Mus</taxon>
    </lineage>
</organism>
<name>UBP43_MOUSE</name>